<dbReference type="EMBL" id="CP000282">
    <property type="protein sequence ID" value="ABD80236.1"/>
    <property type="molecule type" value="Genomic_DNA"/>
</dbReference>
<dbReference type="RefSeq" id="WP_011467456.1">
    <property type="nucleotide sequence ID" value="NC_007912.1"/>
</dbReference>
<dbReference type="SMR" id="Q21M43"/>
<dbReference type="STRING" id="203122.Sde_0974"/>
<dbReference type="GeneID" id="98612660"/>
<dbReference type="KEGG" id="sde:Sde_0974"/>
<dbReference type="eggNOG" id="COG0097">
    <property type="taxonomic scope" value="Bacteria"/>
</dbReference>
<dbReference type="HOGENOM" id="CLU_065464_1_2_6"/>
<dbReference type="OrthoDB" id="9805007at2"/>
<dbReference type="Proteomes" id="UP000001947">
    <property type="component" value="Chromosome"/>
</dbReference>
<dbReference type="GO" id="GO:0022625">
    <property type="term" value="C:cytosolic large ribosomal subunit"/>
    <property type="evidence" value="ECO:0007669"/>
    <property type="project" value="TreeGrafter"/>
</dbReference>
<dbReference type="GO" id="GO:0019843">
    <property type="term" value="F:rRNA binding"/>
    <property type="evidence" value="ECO:0007669"/>
    <property type="project" value="UniProtKB-UniRule"/>
</dbReference>
<dbReference type="GO" id="GO:0003735">
    <property type="term" value="F:structural constituent of ribosome"/>
    <property type="evidence" value="ECO:0007669"/>
    <property type="project" value="InterPro"/>
</dbReference>
<dbReference type="GO" id="GO:0002181">
    <property type="term" value="P:cytoplasmic translation"/>
    <property type="evidence" value="ECO:0007669"/>
    <property type="project" value="TreeGrafter"/>
</dbReference>
<dbReference type="FunFam" id="3.90.930.12:FF:000001">
    <property type="entry name" value="50S ribosomal protein L6"/>
    <property type="match status" value="1"/>
</dbReference>
<dbReference type="FunFam" id="3.90.930.12:FF:000002">
    <property type="entry name" value="50S ribosomal protein L6"/>
    <property type="match status" value="1"/>
</dbReference>
<dbReference type="Gene3D" id="3.90.930.12">
    <property type="entry name" value="Ribosomal protein L6, alpha-beta domain"/>
    <property type="match status" value="2"/>
</dbReference>
<dbReference type="HAMAP" id="MF_01365_B">
    <property type="entry name" value="Ribosomal_uL6_B"/>
    <property type="match status" value="1"/>
</dbReference>
<dbReference type="InterPro" id="IPR000702">
    <property type="entry name" value="Ribosomal_uL6-like"/>
</dbReference>
<dbReference type="InterPro" id="IPR036789">
    <property type="entry name" value="Ribosomal_uL6-like_a/b-dom_sf"/>
</dbReference>
<dbReference type="InterPro" id="IPR020040">
    <property type="entry name" value="Ribosomal_uL6_a/b-dom"/>
</dbReference>
<dbReference type="InterPro" id="IPR019906">
    <property type="entry name" value="Ribosomal_uL6_bac-type"/>
</dbReference>
<dbReference type="InterPro" id="IPR002358">
    <property type="entry name" value="Ribosomal_uL6_CS"/>
</dbReference>
<dbReference type="NCBIfam" id="TIGR03654">
    <property type="entry name" value="L6_bact"/>
    <property type="match status" value="1"/>
</dbReference>
<dbReference type="PANTHER" id="PTHR11655">
    <property type="entry name" value="60S/50S RIBOSOMAL PROTEIN L6/L9"/>
    <property type="match status" value="1"/>
</dbReference>
<dbReference type="PANTHER" id="PTHR11655:SF14">
    <property type="entry name" value="LARGE RIBOSOMAL SUBUNIT PROTEIN UL6M"/>
    <property type="match status" value="1"/>
</dbReference>
<dbReference type="Pfam" id="PF00347">
    <property type="entry name" value="Ribosomal_L6"/>
    <property type="match status" value="2"/>
</dbReference>
<dbReference type="PIRSF" id="PIRSF002162">
    <property type="entry name" value="Ribosomal_L6"/>
    <property type="match status" value="1"/>
</dbReference>
<dbReference type="PRINTS" id="PR00059">
    <property type="entry name" value="RIBOSOMALL6"/>
</dbReference>
<dbReference type="SUPFAM" id="SSF56053">
    <property type="entry name" value="Ribosomal protein L6"/>
    <property type="match status" value="2"/>
</dbReference>
<dbReference type="PROSITE" id="PS00525">
    <property type="entry name" value="RIBOSOMAL_L6_1"/>
    <property type="match status" value="1"/>
</dbReference>
<reference key="1">
    <citation type="journal article" date="2008" name="PLoS Genet.">
        <title>Complete genome sequence of the complex carbohydrate-degrading marine bacterium, Saccharophagus degradans strain 2-40 T.</title>
        <authorList>
            <person name="Weiner R.M."/>
            <person name="Taylor L.E. II"/>
            <person name="Henrissat B."/>
            <person name="Hauser L."/>
            <person name="Land M."/>
            <person name="Coutinho P.M."/>
            <person name="Rancurel C."/>
            <person name="Saunders E.H."/>
            <person name="Longmire A.G."/>
            <person name="Zhang H."/>
            <person name="Bayer E.A."/>
            <person name="Gilbert H.J."/>
            <person name="Larimer F."/>
            <person name="Zhulin I.B."/>
            <person name="Ekborg N.A."/>
            <person name="Lamed R."/>
            <person name="Richardson P.M."/>
            <person name="Borovok I."/>
            <person name="Hutcheson S."/>
        </authorList>
    </citation>
    <scope>NUCLEOTIDE SEQUENCE [LARGE SCALE GENOMIC DNA]</scope>
    <source>
        <strain>2-40 / ATCC 43961 / DSM 17024</strain>
    </source>
</reference>
<organism>
    <name type="scientific">Saccharophagus degradans (strain 2-40 / ATCC 43961 / DSM 17024)</name>
    <dbReference type="NCBI Taxonomy" id="203122"/>
    <lineage>
        <taxon>Bacteria</taxon>
        <taxon>Pseudomonadati</taxon>
        <taxon>Pseudomonadota</taxon>
        <taxon>Gammaproteobacteria</taxon>
        <taxon>Cellvibrionales</taxon>
        <taxon>Cellvibrionaceae</taxon>
        <taxon>Saccharophagus</taxon>
    </lineage>
</organism>
<feature type="chain" id="PRO_0000265289" description="Large ribosomal subunit protein uL6">
    <location>
        <begin position="1"/>
        <end position="177"/>
    </location>
</feature>
<protein>
    <recommendedName>
        <fullName evidence="1">Large ribosomal subunit protein uL6</fullName>
    </recommendedName>
    <alternativeName>
        <fullName evidence="2">50S ribosomal protein L6</fullName>
    </alternativeName>
</protein>
<accession>Q21M43</accession>
<name>RL6_SACD2</name>
<comment type="function">
    <text evidence="1">This protein binds to the 23S rRNA, and is important in its secondary structure. It is located near the subunit interface in the base of the L7/L12 stalk, and near the tRNA binding site of the peptidyltransferase center.</text>
</comment>
<comment type="subunit">
    <text evidence="1">Part of the 50S ribosomal subunit.</text>
</comment>
<comment type="similarity">
    <text evidence="1">Belongs to the universal ribosomal protein uL6 family.</text>
</comment>
<keyword id="KW-1185">Reference proteome</keyword>
<keyword id="KW-0687">Ribonucleoprotein</keyword>
<keyword id="KW-0689">Ribosomal protein</keyword>
<keyword id="KW-0694">RNA-binding</keyword>
<keyword id="KW-0699">rRNA-binding</keyword>
<proteinExistence type="inferred from homology"/>
<gene>
    <name evidence="1" type="primary">rplF</name>
    <name type="ordered locus">Sde_0974</name>
</gene>
<sequence>MSRVANNPVQLPSGVQVDLKGSDLSVKGSKGAMSLSVHSSVAVVQEDNVLTFAAKDGAKSSKAMAGTVRSLVNNMVTGVSVGFEKKLQLVGVGYRTKVTGNVLNLTLGFSHPVDYVLPEGVTAETPTQTEIVLKCSDKQLLGQVAAEIRAFRPPEPYKGKGVRYADENVRRKEAKKK</sequence>
<evidence type="ECO:0000255" key="1">
    <source>
        <dbReference type="HAMAP-Rule" id="MF_01365"/>
    </source>
</evidence>
<evidence type="ECO:0000305" key="2"/>